<dbReference type="EC" id="7.1.2.2" evidence="1"/>
<dbReference type="EMBL" id="AP009044">
    <property type="protein sequence ID" value="BAF54268.1"/>
    <property type="molecule type" value="Genomic_DNA"/>
</dbReference>
<dbReference type="RefSeq" id="WP_003854843.1">
    <property type="nucleotide sequence ID" value="NC_009342.1"/>
</dbReference>
<dbReference type="SMR" id="A4QDH1"/>
<dbReference type="KEGG" id="cgt:cgR_1288"/>
<dbReference type="HOGENOM" id="CLU_010091_2_1_11"/>
<dbReference type="PhylomeDB" id="A4QDH1"/>
<dbReference type="Proteomes" id="UP000006698">
    <property type="component" value="Chromosome"/>
</dbReference>
<dbReference type="GO" id="GO:0005886">
    <property type="term" value="C:plasma membrane"/>
    <property type="evidence" value="ECO:0007669"/>
    <property type="project" value="UniProtKB-SubCell"/>
</dbReference>
<dbReference type="GO" id="GO:0045259">
    <property type="term" value="C:proton-transporting ATP synthase complex"/>
    <property type="evidence" value="ECO:0007669"/>
    <property type="project" value="UniProtKB-KW"/>
</dbReference>
<dbReference type="GO" id="GO:0043531">
    <property type="term" value="F:ADP binding"/>
    <property type="evidence" value="ECO:0007669"/>
    <property type="project" value="TreeGrafter"/>
</dbReference>
<dbReference type="GO" id="GO:0005524">
    <property type="term" value="F:ATP binding"/>
    <property type="evidence" value="ECO:0007669"/>
    <property type="project" value="UniProtKB-UniRule"/>
</dbReference>
<dbReference type="GO" id="GO:0046933">
    <property type="term" value="F:proton-transporting ATP synthase activity, rotational mechanism"/>
    <property type="evidence" value="ECO:0007669"/>
    <property type="project" value="UniProtKB-UniRule"/>
</dbReference>
<dbReference type="CDD" id="cd18113">
    <property type="entry name" value="ATP-synt_F1_alpha_C"/>
    <property type="match status" value="1"/>
</dbReference>
<dbReference type="CDD" id="cd18116">
    <property type="entry name" value="ATP-synt_F1_alpha_N"/>
    <property type="match status" value="1"/>
</dbReference>
<dbReference type="CDD" id="cd01132">
    <property type="entry name" value="F1-ATPase_alpha_CD"/>
    <property type="match status" value="1"/>
</dbReference>
<dbReference type="FunFam" id="1.20.150.20:FF:000001">
    <property type="entry name" value="ATP synthase subunit alpha"/>
    <property type="match status" value="1"/>
</dbReference>
<dbReference type="FunFam" id="3.40.50.300:FF:000002">
    <property type="entry name" value="ATP synthase subunit alpha"/>
    <property type="match status" value="1"/>
</dbReference>
<dbReference type="Gene3D" id="2.40.30.20">
    <property type="match status" value="1"/>
</dbReference>
<dbReference type="Gene3D" id="1.20.150.20">
    <property type="entry name" value="ATP synthase alpha/beta chain, C-terminal domain"/>
    <property type="match status" value="1"/>
</dbReference>
<dbReference type="Gene3D" id="3.40.50.300">
    <property type="entry name" value="P-loop containing nucleotide triphosphate hydrolases"/>
    <property type="match status" value="1"/>
</dbReference>
<dbReference type="HAMAP" id="MF_01346">
    <property type="entry name" value="ATP_synth_alpha_bact"/>
    <property type="match status" value="1"/>
</dbReference>
<dbReference type="InterPro" id="IPR023366">
    <property type="entry name" value="ATP_synth_asu-like_sf"/>
</dbReference>
<dbReference type="InterPro" id="IPR000793">
    <property type="entry name" value="ATP_synth_asu_C"/>
</dbReference>
<dbReference type="InterPro" id="IPR038376">
    <property type="entry name" value="ATP_synth_asu_C_sf"/>
</dbReference>
<dbReference type="InterPro" id="IPR033732">
    <property type="entry name" value="ATP_synth_F1_a_nt-bd_dom"/>
</dbReference>
<dbReference type="InterPro" id="IPR005294">
    <property type="entry name" value="ATP_synth_F1_asu"/>
</dbReference>
<dbReference type="InterPro" id="IPR020003">
    <property type="entry name" value="ATPase_a/bsu_AS"/>
</dbReference>
<dbReference type="InterPro" id="IPR004100">
    <property type="entry name" value="ATPase_F1/V1/A1_a/bsu_N"/>
</dbReference>
<dbReference type="InterPro" id="IPR036121">
    <property type="entry name" value="ATPase_F1/V1/A1_a/bsu_N_sf"/>
</dbReference>
<dbReference type="InterPro" id="IPR000194">
    <property type="entry name" value="ATPase_F1/V1/A1_a/bsu_nucl-bd"/>
</dbReference>
<dbReference type="InterPro" id="IPR027417">
    <property type="entry name" value="P-loop_NTPase"/>
</dbReference>
<dbReference type="NCBIfam" id="TIGR00962">
    <property type="entry name" value="atpA"/>
    <property type="match status" value="1"/>
</dbReference>
<dbReference type="NCBIfam" id="NF009884">
    <property type="entry name" value="PRK13343.1"/>
    <property type="match status" value="1"/>
</dbReference>
<dbReference type="PANTHER" id="PTHR48082">
    <property type="entry name" value="ATP SYNTHASE SUBUNIT ALPHA, MITOCHONDRIAL"/>
    <property type="match status" value="1"/>
</dbReference>
<dbReference type="PANTHER" id="PTHR48082:SF2">
    <property type="entry name" value="ATP SYNTHASE SUBUNIT ALPHA, MITOCHONDRIAL"/>
    <property type="match status" value="1"/>
</dbReference>
<dbReference type="Pfam" id="PF00006">
    <property type="entry name" value="ATP-synt_ab"/>
    <property type="match status" value="1"/>
</dbReference>
<dbReference type="Pfam" id="PF00306">
    <property type="entry name" value="ATP-synt_ab_C"/>
    <property type="match status" value="1"/>
</dbReference>
<dbReference type="Pfam" id="PF02874">
    <property type="entry name" value="ATP-synt_ab_N"/>
    <property type="match status" value="1"/>
</dbReference>
<dbReference type="SUPFAM" id="SSF47917">
    <property type="entry name" value="C-terminal domain of alpha and beta subunits of F1 ATP synthase"/>
    <property type="match status" value="1"/>
</dbReference>
<dbReference type="SUPFAM" id="SSF50615">
    <property type="entry name" value="N-terminal domain of alpha and beta subunits of F1 ATP synthase"/>
    <property type="match status" value="1"/>
</dbReference>
<dbReference type="SUPFAM" id="SSF52540">
    <property type="entry name" value="P-loop containing nucleoside triphosphate hydrolases"/>
    <property type="match status" value="1"/>
</dbReference>
<dbReference type="PROSITE" id="PS00152">
    <property type="entry name" value="ATPASE_ALPHA_BETA"/>
    <property type="match status" value="1"/>
</dbReference>
<proteinExistence type="inferred from homology"/>
<accession>A4QDH1</accession>
<reference key="1">
    <citation type="journal article" date="2007" name="Microbiology">
        <title>Comparative analysis of the Corynebacterium glutamicum group and complete genome sequence of strain R.</title>
        <authorList>
            <person name="Yukawa H."/>
            <person name="Omumasaba C.A."/>
            <person name="Nonaka H."/>
            <person name="Kos P."/>
            <person name="Okai N."/>
            <person name="Suzuki N."/>
            <person name="Suda M."/>
            <person name="Tsuge Y."/>
            <person name="Watanabe J."/>
            <person name="Ikeda Y."/>
            <person name="Vertes A.A."/>
            <person name="Inui M."/>
        </authorList>
    </citation>
    <scope>NUCLEOTIDE SEQUENCE [LARGE SCALE GENOMIC DNA]</scope>
    <source>
        <strain>R</strain>
    </source>
</reference>
<evidence type="ECO:0000255" key="1">
    <source>
        <dbReference type="HAMAP-Rule" id="MF_01346"/>
    </source>
</evidence>
<sequence>MAELTISSDEIRSAIANYTSSYSAEASREEVGVVISAADGIAQVSGLPSVMANELLEFPGGVIGVAQNLEADRVGVVVLGNYELLKEGDQVRRTGDVLSIPVGEAFLGRVINPLGQPIDGLGEIASEEDRVLELQAPTVLERQPVEEPLATGIKAIDAMTPIGRGQRQLIIGDRKTGKTAVCVDTILNQKANWETGDKTKQVRCIYVAIGQKGSTIAALRKTLEEQGALEYTTIVAAPASDAAGFKWLAPFAGAALAQHWMYQGNHVLVIYDDLTKQAEAYRAISLLLRRPPGREAYPGDVFYLHSRLLERAAKLSDDLGAGSITALPIIETKANDVSAFIPTNVISITDGQVFLESDLFNRGIRPAINVGVSVSRVGGAAQTKGMKKVAGSLRLDLAAFRDLEAFATFASDLDAASKSQLERGQRLVQLLIQSENAPQAVEYQIISLWLAGEGAFDNVPVEDVRRFESELHEYLGSNAAQVYEQIAGGAQLSDESKETLLKATEDFKSAFQTTDGTPVINEPEVEALDAGQVKKDQLTVSRKVSKK</sequence>
<protein>
    <recommendedName>
        <fullName evidence="1">ATP synthase subunit alpha</fullName>
        <ecNumber evidence="1">7.1.2.2</ecNumber>
    </recommendedName>
    <alternativeName>
        <fullName evidence="1">ATP synthase F1 sector subunit alpha</fullName>
    </alternativeName>
    <alternativeName>
        <fullName evidence="1">F-ATPase subunit alpha</fullName>
    </alternativeName>
</protein>
<feature type="chain" id="PRO_0000302643" description="ATP synthase subunit alpha">
    <location>
        <begin position="1"/>
        <end position="547"/>
    </location>
</feature>
<feature type="binding site" evidence="1">
    <location>
        <begin position="172"/>
        <end position="179"/>
    </location>
    <ligand>
        <name>ATP</name>
        <dbReference type="ChEBI" id="CHEBI:30616"/>
    </ligand>
</feature>
<feature type="site" description="Required for activity" evidence="1">
    <location>
        <position position="373"/>
    </location>
</feature>
<name>ATPA_CORGB</name>
<keyword id="KW-0066">ATP synthesis</keyword>
<keyword id="KW-0067">ATP-binding</keyword>
<keyword id="KW-1003">Cell membrane</keyword>
<keyword id="KW-0139">CF(1)</keyword>
<keyword id="KW-0375">Hydrogen ion transport</keyword>
<keyword id="KW-0406">Ion transport</keyword>
<keyword id="KW-0472">Membrane</keyword>
<keyword id="KW-0547">Nucleotide-binding</keyword>
<keyword id="KW-1278">Translocase</keyword>
<keyword id="KW-0813">Transport</keyword>
<organism>
    <name type="scientific">Corynebacterium glutamicum (strain R)</name>
    <dbReference type="NCBI Taxonomy" id="340322"/>
    <lineage>
        <taxon>Bacteria</taxon>
        <taxon>Bacillati</taxon>
        <taxon>Actinomycetota</taxon>
        <taxon>Actinomycetes</taxon>
        <taxon>Mycobacteriales</taxon>
        <taxon>Corynebacteriaceae</taxon>
        <taxon>Corynebacterium</taxon>
    </lineage>
</organism>
<comment type="function">
    <text evidence="1">Produces ATP from ADP in the presence of a proton gradient across the membrane. The alpha chain is a regulatory subunit.</text>
</comment>
<comment type="catalytic activity">
    <reaction evidence="1">
        <text>ATP + H2O + 4 H(+)(in) = ADP + phosphate + 5 H(+)(out)</text>
        <dbReference type="Rhea" id="RHEA:57720"/>
        <dbReference type="ChEBI" id="CHEBI:15377"/>
        <dbReference type="ChEBI" id="CHEBI:15378"/>
        <dbReference type="ChEBI" id="CHEBI:30616"/>
        <dbReference type="ChEBI" id="CHEBI:43474"/>
        <dbReference type="ChEBI" id="CHEBI:456216"/>
        <dbReference type="EC" id="7.1.2.2"/>
    </reaction>
</comment>
<comment type="subunit">
    <text evidence="1">F-type ATPases have 2 components, CF(1) - the catalytic core - and CF(0) - the membrane proton channel. CF(1) has five subunits: alpha(3), beta(3), gamma(1), delta(1), epsilon(1). CF(0) has three main subunits: a(1), b(2) and c(9-12). The alpha and beta chains form an alternating ring which encloses part of the gamma chain. CF(1) is attached to CF(0) by a central stalk formed by the gamma and epsilon chains, while a peripheral stalk is formed by the delta and b chains.</text>
</comment>
<comment type="subcellular location">
    <subcellularLocation>
        <location evidence="1">Cell membrane</location>
        <topology evidence="1">Peripheral membrane protein</topology>
    </subcellularLocation>
</comment>
<comment type="similarity">
    <text evidence="1">Belongs to the ATPase alpha/beta chains family.</text>
</comment>
<gene>
    <name evidence="1" type="primary">atpA</name>
    <name type="ordered locus">cgR_1288</name>
</gene>